<accession>Q7A799</accession>
<sequence>MHNMSDIIEQYIKRLFEESNEDVVEIQRANIAQRFDCVPSQLNYVIKTRFTNEHGYEIESKRGGGGYIRITKIENKDATGYINHLLQLIGPSISQQQAYYIIDGLLDKMLINEREAKMIQAVIDRETLSMDMVSRDIIRANILKRLLPVINYY</sequence>
<comment type="function">
    <text evidence="1">Negative regulator of clpC, clpB and clpP transcription by binding directly and specifically to their promoter region.</text>
</comment>
<comment type="similarity">
    <text evidence="2">Belongs to the CtsR family.</text>
</comment>
<name>CTSR_STAAN</name>
<protein>
    <recommendedName>
        <fullName>Transcriptional regulator CtsR</fullName>
    </recommendedName>
</protein>
<dbReference type="EMBL" id="BA000018">
    <property type="protein sequence ID" value="BAB41710.1"/>
    <property type="molecule type" value="Genomic_DNA"/>
</dbReference>
<dbReference type="PIR" id="C89819">
    <property type="entry name" value="C89819"/>
</dbReference>
<dbReference type="RefSeq" id="WP_000551762.1">
    <property type="nucleotide sequence ID" value="NC_002745.2"/>
</dbReference>
<dbReference type="SMR" id="Q7A799"/>
<dbReference type="EnsemblBacteria" id="BAB41710">
    <property type="protein sequence ID" value="BAB41710"/>
    <property type="gene ID" value="BAB41710"/>
</dbReference>
<dbReference type="KEGG" id="sau:SA0480"/>
<dbReference type="HOGENOM" id="CLU_118139_0_0_9"/>
<dbReference type="GO" id="GO:0003677">
    <property type="term" value="F:DNA binding"/>
    <property type="evidence" value="ECO:0007669"/>
    <property type="project" value="UniProtKB-KW"/>
</dbReference>
<dbReference type="GO" id="GO:0006355">
    <property type="term" value="P:regulation of DNA-templated transcription"/>
    <property type="evidence" value="ECO:0007669"/>
    <property type="project" value="InterPro"/>
</dbReference>
<dbReference type="FunFam" id="1.10.1200.150:FF:000002">
    <property type="entry name" value="Transcriptional regulator CtsR"/>
    <property type="match status" value="1"/>
</dbReference>
<dbReference type="FunFam" id="3.30.56.130:FF:000001">
    <property type="entry name" value="Transcriptional regulator CtsR"/>
    <property type="match status" value="1"/>
</dbReference>
<dbReference type="Gene3D" id="1.10.1200.150">
    <property type="entry name" value="Transcriptional regulator CtsR, C-terminal domain"/>
    <property type="match status" value="1"/>
</dbReference>
<dbReference type="Gene3D" id="3.30.56.130">
    <property type="entry name" value="Transcriptional regulator CtsR, winged HTH domain"/>
    <property type="match status" value="1"/>
</dbReference>
<dbReference type="InterPro" id="IPR008463">
    <property type="entry name" value="CtsR"/>
</dbReference>
<dbReference type="InterPro" id="IPR041473">
    <property type="entry name" value="CtsR_C"/>
</dbReference>
<dbReference type="InterPro" id="IPR041908">
    <property type="entry name" value="CtsR_C_sf"/>
</dbReference>
<dbReference type="InterPro" id="IPR040465">
    <property type="entry name" value="CtsR_N"/>
</dbReference>
<dbReference type="InterPro" id="IPR041902">
    <property type="entry name" value="CtsR_N_sf"/>
</dbReference>
<dbReference type="Pfam" id="PF05848">
    <property type="entry name" value="CtsR"/>
    <property type="match status" value="1"/>
</dbReference>
<dbReference type="Pfam" id="PF17727">
    <property type="entry name" value="CtsR_C"/>
    <property type="match status" value="1"/>
</dbReference>
<dbReference type="PIRSF" id="PIRSF010607">
    <property type="entry name" value="Txn_repr_CtsR"/>
    <property type="match status" value="1"/>
</dbReference>
<proteinExistence type="evidence at protein level"/>
<organism>
    <name type="scientific">Staphylococcus aureus (strain N315)</name>
    <dbReference type="NCBI Taxonomy" id="158879"/>
    <lineage>
        <taxon>Bacteria</taxon>
        <taxon>Bacillati</taxon>
        <taxon>Bacillota</taxon>
        <taxon>Bacilli</taxon>
        <taxon>Bacillales</taxon>
        <taxon>Staphylococcaceae</taxon>
        <taxon>Staphylococcus</taxon>
    </lineage>
</organism>
<feature type="chain" id="PRO_0000274133" description="Transcriptional regulator CtsR">
    <location>
        <begin position="1"/>
        <end position="153"/>
    </location>
</feature>
<reference key="1">
    <citation type="journal article" date="2001" name="Lancet">
        <title>Whole genome sequencing of meticillin-resistant Staphylococcus aureus.</title>
        <authorList>
            <person name="Kuroda M."/>
            <person name="Ohta T."/>
            <person name="Uchiyama I."/>
            <person name="Baba T."/>
            <person name="Yuzawa H."/>
            <person name="Kobayashi I."/>
            <person name="Cui L."/>
            <person name="Oguchi A."/>
            <person name="Aoki K."/>
            <person name="Nagai Y."/>
            <person name="Lian J.-Q."/>
            <person name="Ito T."/>
            <person name="Kanamori M."/>
            <person name="Matsumaru H."/>
            <person name="Maruyama A."/>
            <person name="Murakami H."/>
            <person name="Hosoyama A."/>
            <person name="Mizutani-Ui Y."/>
            <person name="Takahashi N.K."/>
            <person name="Sawano T."/>
            <person name="Inoue R."/>
            <person name="Kaito C."/>
            <person name="Sekimizu K."/>
            <person name="Hirakawa H."/>
            <person name="Kuhara S."/>
            <person name="Goto S."/>
            <person name="Yabuzaki J."/>
            <person name="Kanehisa M."/>
            <person name="Yamashita A."/>
            <person name="Oshima K."/>
            <person name="Furuya K."/>
            <person name="Yoshino C."/>
            <person name="Shiba T."/>
            <person name="Hattori M."/>
            <person name="Ogasawara N."/>
            <person name="Hayashi H."/>
            <person name="Hiramatsu K."/>
        </authorList>
    </citation>
    <scope>NUCLEOTIDE SEQUENCE [LARGE SCALE GENOMIC DNA]</scope>
    <source>
        <strain>N315</strain>
    </source>
</reference>
<reference key="2">
    <citation type="submission" date="2007-10" db="UniProtKB">
        <title>Shotgun proteomic analysis of total and membrane protein extracts of S. aureus strain N315.</title>
        <authorList>
            <person name="Vaezzadeh A.R."/>
            <person name="Deshusses J."/>
            <person name="Lescuyer P."/>
            <person name="Hochstrasser D.F."/>
        </authorList>
    </citation>
    <scope>IDENTIFICATION BY MASS SPECTROMETRY [LARGE SCALE ANALYSIS]</scope>
    <source>
        <strain>N315</strain>
    </source>
</reference>
<evidence type="ECO:0000250" key="1"/>
<evidence type="ECO:0000305" key="2"/>
<gene>
    <name type="primary">ctsR</name>
    <name type="ordered locus">SA0480</name>
</gene>
<keyword id="KW-0238">DNA-binding</keyword>
<keyword id="KW-0678">Repressor</keyword>
<keyword id="KW-0346">Stress response</keyword>
<keyword id="KW-0804">Transcription</keyword>
<keyword id="KW-0805">Transcription regulation</keyword>